<comment type="function">
    <text evidence="1">RuBisCO catalyzes two reactions: the carboxylation of D-ribulose 1,5-bisphosphate, the primary event in carbon dioxide fixation, as well as the oxidative fragmentation of the pentose substrate. Both reactions occur simultaneously and in competition at the same active site. Although the small subunit is not catalytic it is essential for maximal activity.</text>
</comment>
<comment type="subunit">
    <text evidence="1">Heterohexadecamer of 8 large and 8 small subunits.</text>
</comment>
<comment type="subcellular location">
    <subcellularLocation>
        <location evidence="1">Plastid</location>
        <location evidence="1">Chloroplast</location>
    </subcellularLocation>
</comment>
<comment type="miscellaneous">
    <text evidence="1">The basic functional RuBisCO is composed of a large chain homodimer in a 'head-to-tail' conformation. In form I RuBisCO this homodimer is arranged in a barrel-like tetramer with the small subunits forming a tetrameric 'cap' on each end of the 'barrel'.</text>
</comment>
<comment type="similarity">
    <text evidence="1">Belongs to the RuBisCO small chain family.</text>
</comment>
<accession>Q39747</accession>
<gene>
    <name evidence="1" type="primary">RBCS5</name>
</gene>
<protein>
    <recommendedName>
        <fullName evidence="1">Ribulose bisphosphate carboxylase small subunit, chloroplastic 5</fullName>
        <shortName evidence="1">RuBisCO small subunit 5</shortName>
    </recommendedName>
</protein>
<sequence>MASIPATVATVAQANMVAPFTGLKSNAAFPVTKKVNDFSTLPSNGGRVQCMKVWPPLGKKRYETLSYLPNLTEVQLAKEVDYLLRNKWVPCLEFELEHGFVYRENARSPGYYDGRYWTMWKLPMFGCTDSAQVMKELQECKKEYPQAWIRIIGFDNVRQVQCISFIASKPDGF</sequence>
<evidence type="ECO:0000255" key="1">
    <source>
        <dbReference type="HAMAP-Rule" id="MF_00860"/>
    </source>
</evidence>
<organism>
    <name type="scientific">Flaveria pringlei</name>
    <dbReference type="NCBI Taxonomy" id="4226"/>
    <lineage>
        <taxon>Eukaryota</taxon>
        <taxon>Viridiplantae</taxon>
        <taxon>Streptophyta</taxon>
        <taxon>Embryophyta</taxon>
        <taxon>Tracheophyta</taxon>
        <taxon>Spermatophyta</taxon>
        <taxon>Magnoliopsida</taxon>
        <taxon>eudicotyledons</taxon>
        <taxon>Gunneridae</taxon>
        <taxon>Pentapetalae</taxon>
        <taxon>asterids</taxon>
        <taxon>campanulids</taxon>
        <taxon>Asterales</taxon>
        <taxon>Asteraceae</taxon>
        <taxon>Asteroideae</taxon>
        <taxon>Heliantheae alliance</taxon>
        <taxon>Tageteae</taxon>
        <taxon>Flaveria</taxon>
    </lineage>
</organism>
<name>RBS5_FLAPR</name>
<reference key="1">
    <citation type="online journal article" date="1996" name="Plant Gene Register">
        <title>Sequences of seven cDNAs encoding the Rubisco small subunit from Flaveria pringlei.</title>
        <authorList>
            <person name="McGonigle B."/>
            <person name="Lai L.B."/>
            <person name="Nelson T."/>
        </authorList>
        <locator>PGR96-057</locator>
    </citation>
    <scope>NUCLEOTIDE SEQUENCE [MRNA]</scope>
    <source>
        <tissue>Leaf</tissue>
    </source>
</reference>
<proteinExistence type="evidence at transcript level"/>
<dbReference type="EMBL" id="U29937">
    <property type="protein sequence ID" value="AAB67849.1"/>
    <property type="molecule type" value="mRNA"/>
</dbReference>
<dbReference type="SMR" id="Q39747"/>
<dbReference type="GO" id="GO:0009507">
    <property type="term" value="C:chloroplast"/>
    <property type="evidence" value="ECO:0007669"/>
    <property type="project" value="UniProtKB-SubCell"/>
</dbReference>
<dbReference type="GO" id="GO:0016984">
    <property type="term" value="F:ribulose-bisphosphate carboxylase activity"/>
    <property type="evidence" value="ECO:0007669"/>
    <property type="project" value="UniProtKB-UniRule"/>
</dbReference>
<dbReference type="GO" id="GO:0009853">
    <property type="term" value="P:photorespiration"/>
    <property type="evidence" value="ECO:0007669"/>
    <property type="project" value="UniProtKB-KW"/>
</dbReference>
<dbReference type="GO" id="GO:0019253">
    <property type="term" value="P:reductive pentose-phosphate cycle"/>
    <property type="evidence" value="ECO:0007669"/>
    <property type="project" value="UniProtKB-UniRule"/>
</dbReference>
<dbReference type="CDD" id="cd03527">
    <property type="entry name" value="RuBisCO_small"/>
    <property type="match status" value="1"/>
</dbReference>
<dbReference type="FunFam" id="3.30.190.10:FF:000001">
    <property type="entry name" value="Ribulose bisphosphate carboxylase small chain, chloroplastic"/>
    <property type="match status" value="1"/>
</dbReference>
<dbReference type="Gene3D" id="3.30.190.10">
    <property type="entry name" value="Ribulose bisphosphate carboxylase, small subunit"/>
    <property type="match status" value="1"/>
</dbReference>
<dbReference type="HAMAP" id="MF_00859">
    <property type="entry name" value="RuBisCO_S_bact"/>
    <property type="match status" value="1"/>
</dbReference>
<dbReference type="InterPro" id="IPR024681">
    <property type="entry name" value="RuBisCO_ssu"/>
</dbReference>
<dbReference type="InterPro" id="IPR000894">
    <property type="entry name" value="RuBisCO_ssu_dom"/>
</dbReference>
<dbReference type="InterPro" id="IPR024680">
    <property type="entry name" value="RuBisCO_ssu_N"/>
</dbReference>
<dbReference type="InterPro" id="IPR036385">
    <property type="entry name" value="RuBisCO_ssu_sf"/>
</dbReference>
<dbReference type="PANTHER" id="PTHR31262">
    <property type="entry name" value="RIBULOSE BISPHOSPHATE CARBOXYLASE SMALL CHAIN 1, CHLOROPLASTIC"/>
    <property type="match status" value="1"/>
</dbReference>
<dbReference type="PANTHER" id="PTHR31262:SF10">
    <property type="entry name" value="RIBULOSE BISPHOSPHATE CARBOXYLASE SMALL SUBUNIT 1A, CHLOROPLASTIC-RELATED"/>
    <property type="match status" value="1"/>
</dbReference>
<dbReference type="Pfam" id="PF12338">
    <property type="entry name" value="RbcS"/>
    <property type="match status" value="1"/>
</dbReference>
<dbReference type="Pfam" id="PF00101">
    <property type="entry name" value="RuBisCO_small"/>
    <property type="match status" value="1"/>
</dbReference>
<dbReference type="PRINTS" id="PR00152">
    <property type="entry name" value="RUBISCOSMALL"/>
</dbReference>
<dbReference type="SMART" id="SM00961">
    <property type="entry name" value="RuBisCO_small"/>
    <property type="match status" value="1"/>
</dbReference>
<dbReference type="SUPFAM" id="SSF55239">
    <property type="entry name" value="RuBisCO, small subunit"/>
    <property type="match status" value="1"/>
</dbReference>
<keyword id="KW-0113">Calvin cycle</keyword>
<keyword id="KW-0120">Carbon dioxide fixation</keyword>
<keyword id="KW-0150">Chloroplast</keyword>
<keyword id="KW-0601">Photorespiration</keyword>
<keyword id="KW-0602">Photosynthesis</keyword>
<keyword id="KW-0934">Plastid</keyword>
<keyword id="KW-0809">Transit peptide</keyword>
<feature type="transit peptide" description="Chloroplast" evidence="1">
    <location>
        <begin position="1"/>
        <end position="49"/>
    </location>
</feature>
<feature type="chain" id="PRO_0000031496" description="Ribulose bisphosphate carboxylase small subunit, chloroplastic 5" evidence="1">
    <location>
        <begin position="50"/>
        <end position="173"/>
    </location>
</feature>